<reference key="1">
    <citation type="journal article" date="2005" name="Nat. Biotechnol.">
        <title>The complete genome sequence of the meat-borne lactic acid bacterium Lactobacillus sakei 23K.</title>
        <authorList>
            <person name="Chaillou S."/>
            <person name="Champomier-Verges M.-C."/>
            <person name="Cornet M."/>
            <person name="Crutz-Le Coq A.-M."/>
            <person name="Dudez A.-M."/>
            <person name="Martin V."/>
            <person name="Beaufils S."/>
            <person name="Darbon-Rongere E."/>
            <person name="Bossy R."/>
            <person name="Loux V."/>
            <person name="Zagorec M."/>
        </authorList>
    </citation>
    <scope>NUCLEOTIDE SEQUENCE [LARGE SCALE GENOMIC DNA]</scope>
    <source>
        <strain>23K</strain>
    </source>
</reference>
<name>Y1354_LATSS</name>
<feature type="chain" id="PRO_1000046977" description="UPF0340 protein LCA_1354">
    <location>
        <begin position="1"/>
        <end position="183"/>
    </location>
</feature>
<protein>
    <recommendedName>
        <fullName evidence="1">UPF0340 protein LCA_1354</fullName>
    </recommendedName>
</protein>
<sequence length="183" mass="19519">MSINLNQIKQDLTQITNDVLTAANLRRGDIFVLGCSTSEVVGGHIGKASSREVGATIIETLLEILKPLDIQLAVQGCEHINRSLVMERSVAEAHDFEIVSVVPAMHAGGACSVAAFEQYSDPVEVEHTVAHAGLDIGDTAIGMHVKFVQVPVRPSLDTLGAAHVTALRSRPKYVGGPRATYDI</sequence>
<organism>
    <name type="scientific">Latilactobacillus sakei subsp. sakei (strain 23K)</name>
    <name type="common">Lactobacillus sakei subsp. sakei</name>
    <dbReference type="NCBI Taxonomy" id="314315"/>
    <lineage>
        <taxon>Bacteria</taxon>
        <taxon>Bacillati</taxon>
        <taxon>Bacillota</taxon>
        <taxon>Bacilli</taxon>
        <taxon>Lactobacillales</taxon>
        <taxon>Lactobacillaceae</taxon>
        <taxon>Latilactobacillus</taxon>
    </lineage>
</organism>
<gene>
    <name type="ordered locus">LCA_1354</name>
</gene>
<accession>Q38VX5</accession>
<keyword id="KW-1185">Reference proteome</keyword>
<proteinExistence type="inferred from homology"/>
<dbReference type="EMBL" id="CR936503">
    <property type="protein sequence ID" value="CAI55658.1"/>
    <property type="molecule type" value="Genomic_DNA"/>
</dbReference>
<dbReference type="RefSeq" id="WP_011375049.1">
    <property type="nucleotide sequence ID" value="NC_007576.1"/>
</dbReference>
<dbReference type="SMR" id="Q38VX5"/>
<dbReference type="STRING" id="314315.LCA_1354"/>
<dbReference type="KEGG" id="lsa:LCA_1354"/>
<dbReference type="eggNOG" id="COG4475">
    <property type="taxonomic scope" value="Bacteria"/>
</dbReference>
<dbReference type="HOGENOM" id="CLU_106658_0_0_9"/>
<dbReference type="OrthoDB" id="9803187at2"/>
<dbReference type="Proteomes" id="UP000002707">
    <property type="component" value="Chromosome"/>
</dbReference>
<dbReference type="Gene3D" id="3.40.50.10360">
    <property type="entry name" value="Hypothetical protein TT1679"/>
    <property type="match status" value="1"/>
</dbReference>
<dbReference type="HAMAP" id="MF_00800">
    <property type="entry name" value="UPF0340"/>
    <property type="match status" value="1"/>
</dbReference>
<dbReference type="InterPro" id="IPR028345">
    <property type="entry name" value="Antibiotic_NAT-like"/>
</dbReference>
<dbReference type="InterPro" id="IPR006340">
    <property type="entry name" value="DUF436"/>
</dbReference>
<dbReference type="NCBIfam" id="TIGR01440">
    <property type="entry name" value="TIGR01440 family protein"/>
    <property type="match status" value="1"/>
</dbReference>
<dbReference type="Pfam" id="PF04260">
    <property type="entry name" value="DUF436"/>
    <property type="match status" value="1"/>
</dbReference>
<dbReference type="PIRSF" id="PIRSF007510">
    <property type="entry name" value="UCP007510"/>
    <property type="match status" value="1"/>
</dbReference>
<dbReference type="SUPFAM" id="SSF110710">
    <property type="entry name" value="TTHA0583/YokD-like"/>
    <property type="match status" value="1"/>
</dbReference>
<comment type="similarity">
    <text evidence="1">Belongs to the UPF0340 family.</text>
</comment>
<evidence type="ECO:0000255" key="1">
    <source>
        <dbReference type="HAMAP-Rule" id="MF_00800"/>
    </source>
</evidence>